<sequence>MPSQMEHAMETMMFTFHKFAGDKGYLTKEDLRVLMEKEFPGFLENQKDPLAVDKIMKDLDQCRDGKVGFQSFFSLIAGLTIACNDYFVVHMKQKGKK</sequence>
<comment type="function">
    <text>Because S100A10 induces the dimerization of ANXA2/p36, it may function as a regulator of protein phosphorylation in that the ANXA2 monomer is the preferred target (in vitro) of tyrosine-specific kinase.</text>
</comment>
<comment type="subunit">
    <text evidence="1 2 3">Heterotetramer containing 2 light chains of S100A10/p11 and 2 heavy chains of ANXA2/p36 (By similarity). Interacts with SCN10A (By similarity). Interacts with TASOR (By similarity).</text>
</comment>
<comment type="miscellaneous">
    <text>Does not appear to bind calcium. Contains 2 ancestral calcium site related to EF-hand domains that have lost their ability to bind calcium.</text>
</comment>
<comment type="similarity">
    <text evidence="5">Belongs to the S-100 family.</text>
</comment>
<name>S10AA_BOVIN</name>
<proteinExistence type="evidence at protein level"/>
<evidence type="ECO:0000250" key="1">
    <source>
        <dbReference type="UniProtKB" id="P05943"/>
    </source>
</evidence>
<evidence type="ECO:0000250" key="2">
    <source>
        <dbReference type="UniProtKB" id="P08207"/>
    </source>
</evidence>
<evidence type="ECO:0000250" key="3">
    <source>
        <dbReference type="UniProtKB" id="P60903"/>
    </source>
</evidence>
<evidence type="ECO:0000269" key="4">
    <source>
    </source>
</evidence>
<evidence type="ECO:0000305" key="5"/>
<feature type="initiator methionine" description="Removed" evidence="4">
    <location>
        <position position="1"/>
    </location>
</feature>
<feature type="chain" id="PRO_0000144001" description="Protein S100-A10">
    <location>
        <begin position="2"/>
        <end position="97"/>
    </location>
</feature>
<feature type="region of interest" description="Ancestral calcium site">
    <location>
        <begin position="60"/>
        <end position="71"/>
    </location>
</feature>
<feature type="modified residue" description="N6-acetyllysine" evidence="3">
    <location>
        <position position="23"/>
    </location>
</feature>
<feature type="modified residue" description="N6-acetyllysine" evidence="3">
    <location>
        <position position="28"/>
    </location>
</feature>
<feature type="modified residue" description="N6-acetyllysine; alternate" evidence="3">
    <location>
        <position position="37"/>
    </location>
</feature>
<feature type="modified residue" description="N6-acetyllysine" evidence="3">
    <location>
        <position position="54"/>
    </location>
</feature>
<feature type="modified residue" description="N6-acetyllysine" evidence="3">
    <location>
        <position position="57"/>
    </location>
</feature>
<feature type="cross-link" description="Glycyl lysine isopeptide (Lys-Gly) (interchain with G-Cter in SUMO2); alternate" evidence="3">
    <location>
        <position position="37"/>
    </location>
</feature>
<feature type="sequence conflict" description="In Ref. 5; no nucleotide entry." evidence="5" ref="5">
    <original>QME</original>
    <variation>EMQ</variation>
    <location>
        <begin position="4"/>
        <end position="6"/>
    </location>
</feature>
<feature type="sequence conflict" description="In Ref. 5; no nucleotide entry." evidence="5" ref="5">
    <original>E</original>
    <variation>Q</variation>
    <location>
        <position position="10"/>
    </location>
</feature>
<dbReference type="EMBL" id="M16464">
    <property type="protein sequence ID" value="AAA30423.1"/>
    <property type="molecule type" value="mRNA"/>
</dbReference>
<dbReference type="EMBL" id="AY911333">
    <property type="protein sequence ID" value="AAW82101.1"/>
    <property type="molecule type" value="mRNA"/>
</dbReference>
<dbReference type="EMBL" id="BC102207">
    <property type="protein sequence ID" value="AAI02208.1"/>
    <property type="molecule type" value="mRNA"/>
</dbReference>
<dbReference type="PIR" id="B28489">
    <property type="entry name" value="B28489"/>
</dbReference>
<dbReference type="RefSeq" id="NP_777075.1">
    <property type="nucleotide sequence ID" value="NM_174650.1"/>
</dbReference>
<dbReference type="SMR" id="P60902"/>
<dbReference type="FunCoup" id="P60902">
    <property type="interactions" value="546"/>
</dbReference>
<dbReference type="STRING" id="9913.ENSBTAP00000020150"/>
<dbReference type="PaxDb" id="9913-ENSBTAP00000020150"/>
<dbReference type="PeptideAtlas" id="P60902"/>
<dbReference type="GeneID" id="282466"/>
<dbReference type="KEGG" id="bta:282466"/>
<dbReference type="CTD" id="6281"/>
<dbReference type="VEuPathDB" id="HostDB:ENSBTAG00000015147"/>
<dbReference type="eggNOG" id="ENOG502S6TB">
    <property type="taxonomic scope" value="Eukaryota"/>
</dbReference>
<dbReference type="HOGENOM" id="CLU_138624_2_1_1"/>
<dbReference type="InParanoid" id="P60902"/>
<dbReference type="OMA" id="VACEQCY"/>
<dbReference type="OrthoDB" id="26525at2759"/>
<dbReference type="TreeFam" id="TF332727"/>
<dbReference type="Reactome" id="R-BTA-75205">
    <property type="pathway name" value="Dissolution of Fibrin Clot"/>
</dbReference>
<dbReference type="CD-CODE" id="D7FE2080">
    <property type="entry name" value="Nucleolus"/>
</dbReference>
<dbReference type="Proteomes" id="UP000009136">
    <property type="component" value="Chromosome 3"/>
</dbReference>
<dbReference type="Bgee" id="ENSBTAG00000015147">
    <property type="expression patterns" value="Expressed in subcutaneous adipose tissue and 104 other cell types or tissues"/>
</dbReference>
<dbReference type="GO" id="GO:1990665">
    <property type="term" value="C:AnxA2-p11 complex"/>
    <property type="evidence" value="ECO:0007669"/>
    <property type="project" value="Ensembl"/>
</dbReference>
<dbReference type="GO" id="GO:0009986">
    <property type="term" value="C:cell surface"/>
    <property type="evidence" value="ECO:0007669"/>
    <property type="project" value="Ensembl"/>
</dbReference>
<dbReference type="GO" id="GO:0005737">
    <property type="term" value="C:cytoplasm"/>
    <property type="evidence" value="ECO:0000318"/>
    <property type="project" value="GO_Central"/>
</dbReference>
<dbReference type="GO" id="GO:0045121">
    <property type="term" value="C:membrane raft"/>
    <property type="evidence" value="ECO:0007669"/>
    <property type="project" value="Ensembl"/>
</dbReference>
<dbReference type="GO" id="GO:0098797">
    <property type="term" value="C:plasma membrane protein complex"/>
    <property type="evidence" value="ECO:0007669"/>
    <property type="project" value="Ensembl"/>
</dbReference>
<dbReference type="GO" id="GO:0090575">
    <property type="term" value="C:RNA polymerase II transcription regulator complex"/>
    <property type="evidence" value="ECO:0007669"/>
    <property type="project" value="Ensembl"/>
</dbReference>
<dbReference type="GO" id="GO:0005509">
    <property type="term" value="F:calcium ion binding"/>
    <property type="evidence" value="ECO:0000318"/>
    <property type="project" value="GO_Central"/>
</dbReference>
<dbReference type="GO" id="GO:0048306">
    <property type="term" value="F:calcium-dependent protein binding"/>
    <property type="evidence" value="ECO:0000318"/>
    <property type="project" value="GO_Central"/>
</dbReference>
<dbReference type="GO" id="GO:0042803">
    <property type="term" value="F:protein homodimerization activity"/>
    <property type="evidence" value="ECO:0007669"/>
    <property type="project" value="Ensembl"/>
</dbReference>
<dbReference type="GO" id="GO:0044325">
    <property type="term" value="F:transmembrane transporter binding"/>
    <property type="evidence" value="ECO:0000318"/>
    <property type="project" value="GO_Central"/>
</dbReference>
<dbReference type="GO" id="GO:0001765">
    <property type="term" value="P:membrane raft assembly"/>
    <property type="evidence" value="ECO:0007669"/>
    <property type="project" value="Ensembl"/>
</dbReference>
<dbReference type="GO" id="GO:0042789">
    <property type="term" value="P:mRNA transcription by RNA polymerase II"/>
    <property type="evidence" value="ECO:0007669"/>
    <property type="project" value="Ensembl"/>
</dbReference>
<dbReference type="GO" id="GO:0051894">
    <property type="term" value="P:positive regulation of focal adhesion assembly"/>
    <property type="evidence" value="ECO:0007669"/>
    <property type="project" value="Ensembl"/>
</dbReference>
<dbReference type="GO" id="GO:0010756">
    <property type="term" value="P:positive regulation of plasminogen activation"/>
    <property type="evidence" value="ECO:0007669"/>
    <property type="project" value="Ensembl"/>
</dbReference>
<dbReference type="GO" id="GO:0051496">
    <property type="term" value="P:positive regulation of stress fiber assembly"/>
    <property type="evidence" value="ECO:0007669"/>
    <property type="project" value="Ensembl"/>
</dbReference>
<dbReference type="GO" id="GO:1900026">
    <property type="term" value="P:positive regulation of substrate adhesion-dependent cell spreading"/>
    <property type="evidence" value="ECO:0007669"/>
    <property type="project" value="Ensembl"/>
</dbReference>
<dbReference type="GO" id="GO:0045944">
    <property type="term" value="P:positive regulation of transcription by RNA polymerase II"/>
    <property type="evidence" value="ECO:0007669"/>
    <property type="project" value="Ensembl"/>
</dbReference>
<dbReference type="GO" id="GO:0072659">
    <property type="term" value="P:protein localization to plasma membrane"/>
    <property type="evidence" value="ECO:0007669"/>
    <property type="project" value="Ensembl"/>
</dbReference>
<dbReference type="GO" id="GO:0050767">
    <property type="term" value="P:regulation of neurogenesis"/>
    <property type="evidence" value="ECO:0007669"/>
    <property type="project" value="Ensembl"/>
</dbReference>
<dbReference type="GO" id="GO:0006900">
    <property type="term" value="P:vesicle budding from membrane"/>
    <property type="evidence" value="ECO:0007669"/>
    <property type="project" value="Ensembl"/>
</dbReference>
<dbReference type="CDD" id="cd05024">
    <property type="entry name" value="S-100A10"/>
    <property type="match status" value="1"/>
</dbReference>
<dbReference type="FunFam" id="1.10.238.10:FF:000167">
    <property type="entry name" value="Protein S100-A10"/>
    <property type="match status" value="1"/>
</dbReference>
<dbReference type="Gene3D" id="1.10.238.10">
    <property type="entry name" value="EF-hand"/>
    <property type="match status" value="1"/>
</dbReference>
<dbReference type="InterPro" id="IPR011992">
    <property type="entry name" value="EF-hand-dom_pair"/>
</dbReference>
<dbReference type="InterPro" id="IPR028476">
    <property type="entry name" value="S100-A10"/>
</dbReference>
<dbReference type="InterPro" id="IPR001751">
    <property type="entry name" value="S100/CaBP7/8-like_CS"/>
</dbReference>
<dbReference type="InterPro" id="IPR013787">
    <property type="entry name" value="S100_Ca-bd_sub"/>
</dbReference>
<dbReference type="PANTHER" id="PTHR11639:SF74">
    <property type="entry name" value="PROTEIN S100-A10"/>
    <property type="match status" value="1"/>
</dbReference>
<dbReference type="PANTHER" id="PTHR11639">
    <property type="entry name" value="S100 CALCIUM-BINDING PROTEIN"/>
    <property type="match status" value="1"/>
</dbReference>
<dbReference type="Pfam" id="PF01023">
    <property type="entry name" value="S_100"/>
    <property type="match status" value="1"/>
</dbReference>
<dbReference type="SMART" id="SM01394">
    <property type="entry name" value="S_100"/>
    <property type="match status" value="1"/>
</dbReference>
<dbReference type="SUPFAM" id="SSF47473">
    <property type="entry name" value="EF-hand"/>
    <property type="match status" value="1"/>
</dbReference>
<dbReference type="PROSITE" id="PS00303">
    <property type="entry name" value="S100_CABP"/>
    <property type="match status" value="1"/>
</dbReference>
<protein>
    <recommendedName>
        <fullName>Protein S100-A10</fullName>
    </recommendedName>
    <alternativeName>
        <fullName>Calpactin I light chain</fullName>
    </alternativeName>
    <alternativeName>
        <fullName>Calpactin-1 light chain</fullName>
    </alternativeName>
    <alternativeName>
        <fullName>Cellular ligand of annexin II</fullName>
    </alternativeName>
    <alternativeName>
        <fullName>S100 calcium-binding protein A10</fullName>
    </alternativeName>
    <alternativeName>
        <fullName>p10 protein</fullName>
    </alternativeName>
    <alternativeName>
        <fullName>p11</fullName>
    </alternativeName>
</protein>
<keyword id="KW-0007">Acetylation</keyword>
<keyword id="KW-0903">Direct protein sequencing</keyword>
<keyword id="KW-1017">Isopeptide bond</keyword>
<keyword id="KW-1185">Reference proteome</keyword>
<keyword id="KW-0832">Ubl conjugation</keyword>
<accession>P60902</accession>
<accession>P08206</accession>
<accession>Q56JZ4</accession>
<gene>
    <name type="primary">S100A10</name>
    <name type="synonym">CAL1L</name>
    <name type="synonym">CLP11</name>
</gene>
<reference key="1">
    <citation type="journal article" date="1987" name="J. Biol. Chem.">
        <title>cDNA sequence and tissue distribution of the mRNA for bovine and murine p11, the S100-related light chain of the protein-tyrosine kinase substrate p36 (calpactin I).</title>
        <authorList>
            <person name="Saris C.J.M."/>
            <person name="Kristensen T."/>
            <person name="D'Eustachio P."/>
            <person name="Hicks L.J."/>
            <person name="Noonan D.J."/>
            <person name="Glenney J.R. Jr."/>
            <person name="Hunter T."/>
            <person name="Tack B.F."/>
        </authorList>
    </citation>
    <scope>NUCLEOTIDE SEQUENCE [MRNA]</scope>
</reference>
<reference key="2">
    <citation type="submission" date="2005-01" db="EMBL/GenBank/DDBJ databases">
        <title>Analysis of sequences obtained from constructed full-length bovine cDNA libraries.</title>
        <authorList>
            <person name="Yu J."/>
            <person name="Meng Y."/>
            <person name="Wang Z."/>
            <person name="Hansen C."/>
            <person name="Li C."/>
            <person name="Moore S.S."/>
        </authorList>
    </citation>
    <scope>NUCLEOTIDE SEQUENCE [LARGE SCALE MRNA]</scope>
    <source>
        <tissue>Lymphoid epithelium</tissue>
    </source>
</reference>
<reference key="3">
    <citation type="submission" date="2005-08" db="EMBL/GenBank/DDBJ databases">
        <authorList>
            <consortium name="NIH - Mammalian Gene Collection (MGC) project"/>
        </authorList>
    </citation>
    <scope>NUCLEOTIDE SEQUENCE [LARGE SCALE MRNA]</scope>
    <source>
        <strain>Crossbred X Angus</strain>
        <tissue>Ileum</tissue>
    </source>
</reference>
<reference key="4">
    <citation type="journal article" date="1985" name="Proc. Natl. Acad. Sci. U.S.A.">
        <title>Amino-terminal sequence of p36 and associated p10: identification of the site of tyrosine phosphorylation and homology with S-100.</title>
        <authorList>
            <person name="Glenney J.R. Jr."/>
            <person name="Tack B.F."/>
        </authorList>
    </citation>
    <scope>PROTEIN SEQUENCE OF 2-57</scope>
</reference>
<reference key="5">
    <citation type="journal article" date="1988" name="Biochem. J.">
        <title>A 36 kDa monomeric protein and its complex with a 10 kDa protein both isolated from bovine aorta are calpactin-like proteins that differ in their Ca2+-dependent calmodulin-binding and actin-severing properties.</title>
        <authorList>
            <person name="Martin F."/>
            <person name="Derancourt J."/>
            <person name="Capony J.-P."/>
            <person name="Watrin A."/>
            <person name="Cavadore J.-C."/>
        </authorList>
    </citation>
    <scope>NUCLEOTIDE SEQUENCE [MRNA] OF 1-21</scope>
    <source>
        <tissue>Aorta</tissue>
    </source>
</reference>
<organism>
    <name type="scientific">Bos taurus</name>
    <name type="common">Bovine</name>
    <dbReference type="NCBI Taxonomy" id="9913"/>
    <lineage>
        <taxon>Eukaryota</taxon>
        <taxon>Metazoa</taxon>
        <taxon>Chordata</taxon>
        <taxon>Craniata</taxon>
        <taxon>Vertebrata</taxon>
        <taxon>Euteleostomi</taxon>
        <taxon>Mammalia</taxon>
        <taxon>Eutheria</taxon>
        <taxon>Laurasiatheria</taxon>
        <taxon>Artiodactyla</taxon>
        <taxon>Ruminantia</taxon>
        <taxon>Pecora</taxon>
        <taxon>Bovidae</taxon>
        <taxon>Bovinae</taxon>
        <taxon>Bos</taxon>
    </lineage>
</organism>